<dbReference type="EC" id="1.1.1.44"/>
<dbReference type="EMBL" id="X65623">
    <property type="protein sequence ID" value="CAA46577.1"/>
    <property type="molecule type" value="Genomic_DNA"/>
</dbReference>
<dbReference type="PIR" id="A48565">
    <property type="entry name" value="A48565"/>
</dbReference>
<dbReference type="PDB" id="1PGJ">
    <property type="method" value="X-ray"/>
    <property type="resolution" value="2.82 A"/>
    <property type="chains" value="A/B=2-479"/>
</dbReference>
<dbReference type="PDBsum" id="1PGJ"/>
<dbReference type="SMR" id="P31072"/>
<dbReference type="BRENDA" id="1.1.1.44">
    <property type="organism ID" value="6519"/>
</dbReference>
<dbReference type="SABIO-RK" id="P31072"/>
<dbReference type="UniPathway" id="UPA00115">
    <property type="reaction ID" value="UER00410"/>
</dbReference>
<dbReference type="EvolutionaryTrace" id="P31072"/>
<dbReference type="GO" id="GO:0097014">
    <property type="term" value="C:ciliary plasm"/>
    <property type="evidence" value="ECO:0000314"/>
    <property type="project" value="GeneDB"/>
</dbReference>
<dbReference type="GO" id="GO:0005737">
    <property type="term" value="C:cytoplasm"/>
    <property type="evidence" value="ECO:0000314"/>
    <property type="project" value="GeneDB"/>
</dbReference>
<dbReference type="GO" id="GO:0020015">
    <property type="term" value="C:glycosome"/>
    <property type="evidence" value="ECO:0000314"/>
    <property type="project" value="GeneDB"/>
</dbReference>
<dbReference type="GO" id="GO:0050661">
    <property type="term" value="F:NADP binding"/>
    <property type="evidence" value="ECO:0000269"/>
    <property type="project" value="GeneDB"/>
</dbReference>
<dbReference type="GO" id="GO:0004616">
    <property type="term" value="F:phosphogluconate dehydrogenase (decarboxylating) activity"/>
    <property type="evidence" value="ECO:0000269"/>
    <property type="project" value="GeneDB"/>
</dbReference>
<dbReference type="GO" id="GO:0019521">
    <property type="term" value="P:D-gluconate metabolic process"/>
    <property type="evidence" value="ECO:0007669"/>
    <property type="project" value="UniProtKB-KW"/>
</dbReference>
<dbReference type="GO" id="GO:0006098">
    <property type="term" value="P:pentose-phosphate shunt"/>
    <property type="evidence" value="ECO:0000255"/>
    <property type="project" value="GeneDB"/>
</dbReference>
<dbReference type="FunFam" id="1.10.1040.10:FF:000032">
    <property type="entry name" value="6-phosphogluconate dehydrogenase, decarboxylating"/>
    <property type="match status" value="1"/>
</dbReference>
<dbReference type="FunFam" id="3.40.50.720:FF:000533">
    <property type="entry name" value="6-phosphogluconate dehydrogenase, decarboxylating"/>
    <property type="match status" value="1"/>
</dbReference>
<dbReference type="Gene3D" id="1.20.5.320">
    <property type="entry name" value="6-Phosphogluconate Dehydrogenase, domain 3"/>
    <property type="match status" value="1"/>
</dbReference>
<dbReference type="Gene3D" id="1.10.1040.10">
    <property type="entry name" value="N-(1-d-carboxylethyl)-l-norvaline Dehydrogenase, domain 2"/>
    <property type="match status" value="1"/>
</dbReference>
<dbReference type="Gene3D" id="3.40.50.720">
    <property type="entry name" value="NAD(P)-binding Rossmann-like Domain"/>
    <property type="match status" value="1"/>
</dbReference>
<dbReference type="InterPro" id="IPR008927">
    <property type="entry name" value="6-PGluconate_DH-like_C_sf"/>
</dbReference>
<dbReference type="InterPro" id="IPR013328">
    <property type="entry name" value="6PGD_dom2"/>
</dbReference>
<dbReference type="InterPro" id="IPR006114">
    <property type="entry name" value="6PGDH_C"/>
</dbReference>
<dbReference type="InterPro" id="IPR006113">
    <property type="entry name" value="6PGDH_Gnd/GntZ"/>
</dbReference>
<dbReference type="InterPro" id="IPR006115">
    <property type="entry name" value="6PGDH_NADP-bd"/>
</dbReference>
<dbReference type="InterPro" id="IPR006184">
    <property type="entry name" value="6PGdom_BS"/>
</dbReference>
<dbReference type="InterPro" id="IPR036291">
    <property type="entry name" value="NAD(P)-bd_dom_sf"/>
</dbReference>
<dbReference type="InterPro" id="IPR006183">
    <property type="entry name" value="Pgluconate_DH"/>
</dbReference>
<dbReference type="NCBIfam" id="TIGR00873">
    <property type="entry name" value="gnd"/>
    <property type="match status" value="1"/>
</dbReference>
<dbReference type="NCBIfam" id="NF006765">
    <property type="entry name" value="PRK09287.1"/>
    <property type="match status" value="1"/>
</dbReference>
<dbReference type="PANTHER" id="PTHR11811">
    <property type="entry name" value="6-PHOSPHOGLUCONATE DEHYDROGENASE"/>
    <property type="match status" value="1"/>
</dbReference>
<dbReference type="Pfam" id="PF00393">
    <property type="entry name" value="6PGD"/>
    <property type="match status" value="1"/>
</dbReference>
<dbReference type="Pfam" id="PF03446">
    <property type="entry name" value="NAD_binding_2"/>
    <property type="match status" value="1"/>
</dbReference>
<dbReference type="PIRSF" id="PIRSF000109">
    <property type="entry name" value="6PGD"/>
    <property type="match status" value="1"/>
</dbReference>
<dbReference type="PRINTS" id="PR00076">
    <property type="entry name" value="6PGDHDRGNASE"/>
</dbReference>
<dbReference type="SMART" id="SM01350">
    <property type="entry name" value="6PGD"/>
    <property type="match status" value="1"/>
</dbReference>
<dbReference type="SUPFAM" id="SSF48179">
    <property type="entry name" value="6-phosphogluconate dehydrogenase C-terminal domain-like"/>
    <property type="match status" value="1"/>
</dbReference>
<dbReference type="SUPFAM" id="SSF51735">
    <property type="entry name" value="NAD(P)-binding Rossmann-fold domains"/>
    <property type="match status" value="1"/>
</dbReference>
<dbReference type="PROSITE" id="PS00461">
    <property type="entry name" value="6PGD"/>
    <property type="match status" value="1"/>
</dbReference>
<protein>
    <recommendedName>
        <fullName>6-phosphogluconate dehydrogenase, decarboxylating</fullName>
        <ecNumber>1.1.1.44</ecNumber>
    </recommendedName>
</protein>
<gene>
    <name type="primary">GND</name>
</gene>
<organism>
    <name type="scientific">Trypanosoma brucei brucei</name>
    <dbReference type="NCBI Taxonomy" id="5702"/>
    <lineage>
        <taxon>Eukaryota</taxon>
        <taxon>Discoba</taxon>
        <taxon>Euglenozoa</taxon>
        <taxon>Kinetoplastea</taxon>
        <taxon>Metakinetoplastina</taxon>
        <taxon>Trypanosomatida</taxon>
        <taxon>Trypanosomatidae</taxon>
        <taxon>Trypanosoma</taxon>
    </lineage>
</organism>
<reference key="1">
    <citation type="journal article" date="1993" name="Mol. Biochem. Parasitol.">
        <title>A 6-phosphogluconate dehydrogenase gene from Trypanosoma brucei.</title>
        <authorList>
            <person name="Barrett M.P."/>
            <person name="le Page R.W.F."/>
        </authorList>
    </citation>
    <scope>NUCLEOTIDE SEQUENCE [GENOMIC DNA]</scope>
    <source>
        <strain>427</strain>
    </source>
</reference>
<reference key="2">
    <citation type="journal article" date="1998" name="J. Mol. Biol.">
        <title>A 2.8-A resolution structure of 6-phosphogluconate dehydrogenase from the protozoan parasite Trypanosoma brucei: comparison with the sheep enzyme accounts for differences in activity with coenzyme and substrate analogues.</title>
        <authorList>
            <person name="Phillips C."/>
            <person name="Dohnalek J."/>
            <person name="Gover S."/>
            <person name="Barrett M.P."/>
            <person name="Adams M.J."/>
        </authorList>
    </citation>
    <scope>X-RAY CRYSTALLOGRAPHY (2.8 ANGSTROMS)</scope>
    <scope>SUBUNIT</scope>
</reference>
<name>6PGD_TRYBB</name>
<proteinExistence type="evidence at protein level"/>
<comment type="function">
    <text evidence="1">Catalyzes the oxidative decarboxylation of 6-phosphogluconate to ribulose 5-phosphate and CO(2), with concomitant reduction of NADP to NADPH.</text>
</comment>
<comment type="catalytic activity">
    <reaction>
        <text>6-phospho-D-gluconate + NADP(+) = D-ribulose 5-phosphate + CO2 + NADPH</text>
        <dbReference type="Rhea" id="RHEA:10116"/>
        <dbReference type="ChEBI" id="CHEBI:16526"/>
        <dbReference type="ChEBI" id="CHEBI:57783"/>
        <dbReference type="ChEBI" id="CHEBI:58121"/>
        <dbReference type="ChEBI" id="CHEBI:58349"/>
        <dbReference type="ChEBI" id="CHEBI:58759"/>
        <dbReference type="EC" id="1.1.1.44"/>
    </reaction>
</comment>
<comment type="pathway">
    <text>Carbohydrate degradation; pentose phosphate pathway; D-ribulose 5-phosphate from D-glucose 6-phosphate (oxidative stage): step 3/3.</text>
</comment>
<comment type="subunit">
    <text evidence="2">Homodimer.</text>
</comment>
<comment type="similarity">
    <text evidence="3">Belongs to the 6-phosphogluconate dehydrogenase family.</text>
</comment>
<evidence type="ECO:0000250" key="1"/>
<evidence type="ECO:0000269" key="2">
    <source>
    </source>
</evidence>
<evidence type="ECO:0000305" key="3"/>
<evidence type="ECO:0007829" key="4">
    <source>
        <dbReference type="PDB" id="1PGJ"/>
    </source>
</evidence>
<feature type="chain" id="PRO_0000090071" description="6-phosphogluconate dehydrogenase, decarboxylating">
    <location>
        <begin position="1"/>
        <end position="479"/>
    </location>
</feature>
<feature type="active site" description="Proton acceptor" evidence="1">
    <location>
        <position position="186"/>
    </location>
</feature>
<feature type="active site" description="Proton donor" evidence="1">
    <location>
        <position position="193"/>
    </location>
</feature>
<feature type="binding site" evidence="1">
    <location>
        <begin position="9"/>
        <end position="14"/>
    </location>
    <ligand>
        <name>NADP(+)</name>
        <dbReference type="ChEBI" id="CHEBI:58349"/>
    </ligand>
</feature>
<feature type="binding site" evidence="1">
    <location>
        <begin position="32"/>
        <end position="34"/>
    </location>
    <ligand>
        <name>NADP(+)</name>
        <dbReference type="ChEBI" id="CHEBI:58349"/>
    </ligand>
</feature>
<feature type="binding site" evidence="1">
    <location>
        <begin position="77"/>
        <end position="79"/>
    </location>
    <ligand>
        <name>NADP(+)</name>
        <dbReference type="ChEBI" id="CHEBI:58349"/>
    </ligand>
</feature>
<feature type="binding site" evidence="1">
    <location>
        <position position="105"/>
    </location>
    <ligand>
        <name>NADP(+)</name>
        <dbReference type="ChEBI" id="CHEBI:58349"/>
    </ligand>
</feature>
<feature type="binding site" description="in other chain" evidence="1">
    <location>
        <position position="105"/>
    </location>
    <ligand>
        <name>substrate</name>
        <note>ligand shared between dimeric partners</note>
    </ligand>
</feature>
<feature type="binding site" description="in other chain" evidence="1">
    <location>
        <begin position="131"/>
        <end position="133"/>
    </location>
    <ligand>
        <name>substrate</name>
        <note>ligand shared between dimeric partners</note>
    </ligand>
</feature>
<feature type="binding site" description="in other chain" evidence="1">
    <location>
        <begin position="189"/>
        <end position="190"/>
    </location>
    <ligand>
        <name>substrate</name>
        <note>ligand shared between dimeric partners</note>
    </ligand>
</feature>
<feature type="binding site" description="in other chain" evidence="1">
    <location>
        <position position="194"/>
    </location>
    <ligand>
        <name>substrate</name>
        <note>ligand shared between dimeric partners</note>
    </ligand>
</feature>
<feature type="binding site" description="in other chain" evidence="1">
    <location>
        <position position="263"/>
    </location>
    <ligand>
        <name>substrate</name>
        <note>ligand shared between dimeric partners</note>
    </ligand>
</feature>
<feature type="binding site" description="in other chain" evidence="1">
    <location>
        <position position="290"/>
    </location>
    <ligand>
        <name>substrate</name>
        <note>ligand shared between dimeric partners</note>
    </ligand>
</feature>
<feature type="binding site" evidence="1">
    <location>
        <position position="454"/>
    </location>
    <ligand>
        <name>substrate</name>
        <note>ligand shared between dimeric partners</note>
    </ligand>
</feature>
<feature type="binding site" evidence="1">
    <location>
        <position position="460"/>
    </location>
    <ligand>
        <name>substrate</name>
        <note>ligand shared between dimeric partners</note>
    </ligand>
</feature>
<feature type="strand" evidence="4">
    <location>
        <begin position="3"/>
        <end position="8"/>
    </location>
</feature>
<feature type="helix" evidence="4">
    <location>
        <begin position="12"/>
        <end position="23"/>
    </location>
</feature>
<feature type="strand" evidence="4">
    <location>
        <begin position="28"/>
        <end position="31"/>
    </location>
</feature>
<feature type="helix" evidence="4">
    <location>
        <begin position="35"/>
        <end position="44"/>
    </location>
</feature>
<feature type="turn" evidence="4">
    <location>
        <begin position="45"/>
        <end position="47"/>
    </location>
</feature>
<feature type="helix" evidence="4">
    <location>
        <begin position="51"/>
        <end position="53"/>
    </location>
</feature>
<feature type="strand" evidence="4">
    <location>
        <begin position="54"/>
        <end position="56"/>
    </location>
</feature>
<feature type="helix" evidence="4">
    <location>
        <begin position="60"/>
        <end position="66"/>
    </location>
</feature>
<feature type="strand" evidence="4">
    <location>
        <begin position="72"/>
        <end position="75"/>
    </location>
</feature>
<feature type="helix" evidence="4">
    <location>
        <begin position="81"/>
        <end position="93"/>
    </location>
</feature>
<feature type="strand" evidence="4">
    <location>
        <begin position="99"/>
        <end position="102"/>
    </location>
</feature>
<feature type="helix" evidence="4">
    <location>
        <begin position="108"/>
        <end position="119"/>
    </location>
</feature>
<feature type="turn" evidence="4">
    <location>
        <begin position="120"/>
        <end position="122"/>
    </location>
</feature>
<feature type="strand" evidence="4">
    <location>
        <begin position="124"/>
        <end position="132"/>
    </location>
</feature>
<feature type="helix" evidence="4">
    <location>
        <begin position="133"/>
        <end position="139"/>
    </location>
</feature>
<feature type="strand" evidence="4">
    <location>
        <begin position="142"/>
        <end position="147"/>
    </location>
</feature>
<feature type="helix" evidence="4">
    <location>
        <begin position="149"/>
        <end position="162"/>
    </location>
</feature>
<feature type="helix" evidence="4">
    <location>
        <begin position="181"/>
        <end position="209"/>
    </location>
</feature>
<feature type="helix" evidence="4">
    <location>
        <begin position="214"/>
        <end position="226"/>
    </location>
</feature>
<feature type="helix" evidence="4">
    <location>
        <begin position="233"/>
        <end position="243"/>
    </location>
</feature>
<feature type="strand" evidence="4">
    <location>
        <begin position="249"/>
        <end position="251"/>
    </location>
</feature>
<feature type="helix" evidence="4">
    <location>
        <begin position="252"/>
        <end position="255"/>
    </location>
</feature>
<feature type="helix" evidence="4">
    <location>
        <begin position="265"/>
        <end position="276"/>
    </location>
</feature>
<feature type="helix" evidence="4">
    <location>
        <begin position="281"/>
        <end position="294"/>
    </location>
</feature>
<feature type="helix" evidence="4">
    <location>
        <begin position="296"/>
        <end position="305"/>
    </location>
</feature>
<feature type="turn" evidence="4">
    <location>
        <begin position="307"/>
        <end position="310"/>
    </location>
</feature>
<feature type="helix" evidence="4">
    <location>
        <begin position="325"/>
        <end position="356"/>
    </location>
</feature>
<feature type="helix" evidence="4">
    <location>
        <begin position="362"/>
        <end position="367"/>
    </location>
</feature>
<feature type="strand" evidence="4">
    <location>
        <begin position="370"/>
        <end position="373"/>
    </location>
</feature>
<feature type="helix" evidence="4">
    <location>
        <begin position="380"/>
        <end position="389"/>
    </location>
</feature>
<feature type="helix" evidence="4">
    <location>
        <begin position="398"/>
        <end position="400"/>
    </location>
</feature>
<feature type="helix" evidence="4">
    <location>
        <begin position="401"/>
        <end position="421"/>
    </location>
</feature>
<feature type="helix" evidence="4">
    <location>
        <begin position="427"/>
        <end position="439"/>
    </location>
</feature>
<feature type="helix" evidence="4">
    <location>
        <begin position="446"/>
        <end position="458"/>
    </location>
</feature>
<feature type="strand" evidence="4">
    <location>
        <begin position="462"/>
        <end position="471"/>
    </location>
</feature>
<accession>P31072</accession>
<keyword id="KW-0002">3D-structure</keyword>
<keyword id="KW-0311">Gluconate utilization</keyword>
<keyword id="KW-0521">NADP</keyword>
<keyword id="KW-0560">Oxidoreductase</keyword>
<keyword id="KW-0570">Pentose shunt</keyword>
<sequence>MSMDVGVVGLGVMGANLALNIAEKGFKVAVFNRTYSKSEEFMKANASAPFAGNLKAFETMEAFAASLKKPRKALILVQAGAATDSTTEQLKKVFEKGDILVDTGNAHFKDQGRRAQQLEAAGLRFLGMGISGGEEGARKGPAFFPGGTLSVWEEIRPIVEAAAAKADDGRPCVTMNGSGGAGSCVKMYHNSGEYAILQIWGEVFDILRAMGLNNDEVAAVLEDWKSKNFLKSYMLDISIAAARAKDKDGSYLTEHVMDRIGSKGTGLWSAQEALEIGVPAPSLNMAVVSRQFTMYKTERQANASNAPGITQSPGYTLKNKSPSGPEIKQLYDSVCIAIISCYAQMFQCLREMDKVHNFGLNLPATIATFRAGCILQGYLLKPMTEAFEKNPNISNLMCAFQTEIRAGLQNYRDMVALITSKLEVSIPVLSASLNYVTAMFTPTLKYGQLVSLQRDVFGRHGYERVDKDGRESFQWPELQ</sequence>